<name>CLPX_CLOPE</name>
<evidence type="ECO:0000255" key="1">
    <source>
        <dbReference type="HAMAP-Rule" id="MF_00175"/>
    </source>
</evidence>
<evidence type="ECO:0000255" key="2">
    <source>
        <dbReference type="PROSITE-ProRule" id="PRU01250"/>
    </source>
</evidence>
<evidence type="ECO:0000256" key="3">
    <source>
        <dbReference type="SAM" id="MobiDB-lite"/>
    </source>
</evidence>
<keyword id="KW-0067">ATP-binding</keyword>
<keyword id="KW-0143">Chaperone</keyword>
<keyword id="KW-0479">Metal-binding</keyword>
<keyword id="KW-0547">Nucleotide-binding</keyword>
<keyword id="KW-1185">Reference proteome</keyword>
<keyword id="KW-0862">Zinc</keyword>
<sequence>MGKFEDKKQLRCSFCGKNQEQVKRLIAGPGVYICDECIELCSEIIEDEFEGNTESSPLEASNLPKPQEIKDYLDQYVVGQDRAKKSLAVAVYNHYKRINANKAEDDVELQKSNILLLGPTGSGKTLLAQTLAKMLNVPFAIADATTLTEAGYVGEDVENILLKLIQNADYDVERAEKGIIYIDEIDKIARKSENPSITRDVSGEGVQQALLKILEGTTASVPPQGGRKHPHQEFIQINTSNILFICGGAFDGIDKIIEKRGTKSSIGFGAEVKGKSEKNVGELLKDIMPGDLLKFGLIPEFVGRLPVLVTLEALDNEALVSILTKPKNALVKQYKKLFELDNVKLDFTEEALKAIADEAINRKTGARGLRAIVEETMMDIMFDIPSEENIVKATITEETIKDRKDPELEKLPEGEVRPTLKTEKKNKARKDIETA</sequence>
<dbReference type="EMBL" id="BA000016">
    <property type="protein sequence ID" value="BAB81098.1"/>
    <property type="molecule type" value="Genomic_DNA"/>
</dbReference>
<dbReference type="RefSeq" id="WP_003448621.1">
    <property type="nucleotide sequence ID" value="NC_003366.1"/>
</dbReference>
<dbReference type="SMR" id="Q8XKK2"/>
<dbReference type="STRING" id="195102.gene:10490656"/>
<dbReference type="GeneID" id="93002066"/>
<dbReference type="KEGG" id="cpe:CPE1392"/>
<dbReference type="HOGENOM" id="CLU_014218_8_2_9"/>
<dbReference type="Proteomes" id="UP000000818">
    <property type="component" value="Chromosome"/>
</dbReference>
<dbReference type="GO" id="GO:0009376">
    <property type="term" value="C:HslUV protease complex"/>
    <property type="evidence" value="ECO:0007669"/>
    <property type="project" value="TreeGrafter"/>
</dbReference>
<dbReference type="GO" id="GO:0005524">
    <property type="term" value="F:ATP binding"/>
    <property type="evidence" value="ECO:0007669"/>
    <property type="project" value="UniProtKB-UniRule"/>
</dbReference>
<dbReference type="GO" id="GO:0016887">
    <property type="term" value="F:ATP hydrolysis activity"/>
    <property type="evidence" value="ECO:0007669"/>
    <property type="project" value="InterPro"/>
</dbReference>
<dbReference type="GO" id="GO:0140662">
    <property type="term" value="F:ATP-dependent protein folding chaperone"/>
    <property type="evidence" value="ECO:0007669"/>
    <property type="project" value="InterPro"/>
</dbReference>
<dbReference type="GO" id="GO:0046983">
    <property type="term" value="F:protein dimerization activity"/>
    <property type="evidence" value="ECO:0007669"/>
    <property type="project" value="InterPro"/>
</dbReference>
<dbReference type="GO" id="GO:0051082">
    <property type="term" value="F:unfolded protein binding"/>
    <property type="evidence" value="ECO:0007669"/>
    <property type="project" value="UniProtKB-UniRule"/>
</dbReference>
<dbReference type="GO" id="GO:0008270">
    <property type="term" value="F:zinc ion binding"/>
    <property type="evidence" value="ECO:0007669"/>
    <property type="project" value="InterPro"/>
</dbReference>
<dbReference type="GO" id="GO:0051301">
    <property type="term" value="P:cell division"/>
    <property type="evidence" value="ECO:0007669"/>
    <property type="project" value="TreeGrafter"/>
</dbReference>
<dbReference type="GO" id="GO:0051603">
    <property type="term" value="P:proteolysis involved in protein catabolic process"/>
    <property type="evidence" value="ECO:0007669"/>
    <property type="project" value="TreeGrafter"/>
</dbReference>
<dbReference type="CDD" id="cd19497">
    <property type="entry name" value="RecA-like_ClpX"/>
    <property type="match status" value="1"/>
</dbReference>
<dbReference type="FunFam" id="1.10.8.60:FF:000002">
    <property type="entry name" value="ATP-dependent Clp protease ATP-binding subunit ClpX"/>
    <property type="match status" value="1"/>
</dbReference>
<dbReference type="FunFam" id="3.40.50.300:FF:000005">
    <property type="entry name" value="ATP-dependent Clp protease ATP-binding subunit ClpX"/>
    <property type="match status" value="1"/>
</dbReference>
<dbReference type="Gene3D" id="1.10.8.60">
    <property type="match status" value="1"/>
</dbReference>
<dbReference type="Gene3D" id="6.20.220.10">
    <property type="entry name" value="ClpX chaperone, C4-type zinc finger domain"/>
    <property type="match status" value="1"/>
</dbReference>
<dbReference type="Gene3D" id="3.40.50.300">
    <property type="entry name" value="P-loop containing nucleotide triphosphate hydrolases"/>
    <property type="match status" value="1"/>
</dbReference>
<dbReference type="HAMAP" id="MF_00175">
    <property type="entry name" value="ClpX"/>
    <property type="match status" value="1"/>
</dbReference>
<dbReference type="InterPro" id="IPR003593">
    <property type="entry name" value="AAA+_ATPase"/>
</dbReference>
<dbReference type="InterPro" id="IPR050052">
    <property type="entry name" value="ATP-dep_Clp_protease_ClpX"/>
</dbReference>
<dbReference type="InterPro" id="IPR003959">
    <property type="entry name" value="ATPase_AAA_core"/>
</dbReference>
<dbReference type="InterPro" id="IPR019489">
    <property type="entry name" value="Clp_ATPase_C"/>
</dbReference>
<dbReference type="InterPro" id="IPR004487">
    <property type="entry name" value="Clp_protease_ATP-bd_su_ClpX"/>
</dbReference>
<dbReference type="InterPro" id="IPR046425">
    <property type="entry name" value="ClpX_bact"/>
</dbReference>
<dbReference type="InterPro" id="IPR027417">
    <property type="entry name" value="P-loop_NTPase"/>
</dbReference>
<dbReference type="InterPro" id="IPR010603">
    <property type="entry name" value="Znf_CppX_C4"/>
</dbReference>
<dbReference type="InterPro" id="IPR038366">
    <property type="entry name" value="Znf_CppX_C4_sf"/>
</dbReference>
<dbReference type="NCBIfam" id="TIGR00382">
    <property type="entry name" value="clpX"/>
    <property type="match status" value="1"/>
</dbReference>
<dbReference type="NCBIfam" id="NF003745">
    <property type="entry name" value="PRK05342.1"/>
    <property type="match status" value="1"/>
</dbReference>
<dbReference type="PANTHER" id="PTHR48102:SF7">
    <property type="entry name" value="ATP-DEPENDENT CLP PROTEASE ATP-BINDING SUBUNIT CLPX-LIKE, MITOCHONDRIAL"/>
    <property type="match status" value="1"/>
</dbReference>
<dbReference type="PANTHER" id="PTHR48102">
    <property type="entry name" value="ATP-DEPENDENT CLP PROTEASE ATP-BINDING SUBUNIT CLPX-LIKE, MITOCHONDRIAL-RELATED"/>
    <property type="match status" value="1"/>
</dbReference>
<dbReference type="Pfam" id="PF07724">
    <property type="entry name" value="AAA_2"/>
    <property type="match status" value="1"/>
</dbReference>
<dbReference type="Pfam" id="PF10431">
    <property type="entry name" value="ClpB_D2-small"/>
    <property type="match status" value="1"/>
</dbReference>
<dbReference type="Pfam" id="PF06689">
    <property type="entry name" value="zf-C4_ClpX"/>
    <property type="match status" value="1"/>
</dbReference>
<dbReference type="SMART" id="SM00382">
    <property type="entry name" value="AAA"/>
    <property type="match status" value="1"/>
</dbReference>
<dbReference type="SMART" id="SM01086">
    <property type="entry name" value="ClpB_D2-small"/>
    <property type="match status" value="1"/>
</dbReference>
<dbReference type="SMART" id="SM00994">
    <property type="entry name" value="zf-C4_ClpX"/>
    <property type="match status" value="1"/>
</dbReference>
<dbReference type="SUPFAM" id="SSF57716">
    <property type="entry name" value="Glucocorticoid receptor-like (DNA-binding domain)"/>
    <property type="match status" value="1"/>
</dbReference>
<dbReference type="SUPFAM" id="SSF52540">
    <property type="entry name" value="P-loop containing nucleoside triphosphate hydrolases"/>
    <property type="match status" value="1"/>
</dbReference>
<dbReference type="PROSITE" id="PS51902">
    <property type="entry name" value="CLPX_ZB"/>
    <property type="match status" value="1"/>
</dbReference>
<proteinExistence type="inferred from homology"/>
<comment type="function">
    <text evidence="1">ATP-dependent specificity component of the Clp protease. It directs the protease to specific substrates. Can perform chaperone functions in the absence of ClpP.</text>
</comment>
<comment type="subunit">
    <text evidence="1">Component of the ClpX-ClpP complex. Forms a hexameric ring that, in the presence of ATP, binds to fourteen ClpP subunits assembled into a disk-like structure with a central cavity, resembling the structure of eukaryotic proteasomes.</text>
</comment>
<comment type="similarity">
    <text evidence="1">Belongs to the ClpX chaperone family.</text>
</comment>
<gene>
    <name evidence="1" type="primary">clpX</name>
    <name type="ordered locus">CPE1392</name>
</gene>
<protein>
    <recommendedName>
        <fullName evidence="1">ATP-dependent Clp protease ATP-binding subunit ClpX</fullName>
    </recommendedName>
</protein>
<accession>Q8XKK2</accession>
<reference key="1">
    <citation type="journal article" date="2002" name="Proc. Natl. Acad. Sci. U.S.A.">
        <title>Complete genome sequence of Clostridium perfringens, an anaerobic flesh-eater.</title>
        <authorList>
            <person name="Shimizu T."/>
            <person name="Ohtani K."/>
            <person name="Hirakawa H."/>
            <person name="Ohshima K."/>
            <person name="Yamashita A."/>
            <person name="Shiba T."/>
            <person name="Ogasawara N."/>
            <person name="Hattori M."/>
            <person name="Kuhara S."/>
            <person name="Hayashi H."/>
        </authorList>
    </citation>
    <scope>NUCLEOTIDE SEQUENCE [LARGE SCALE GENOMIC DNA]</scope>
    <source>
        <strain>13 / Type A</strain>
    </source>
</reference>
<organism>
    <name type="scientific">Clostridium perfringens (strain 13 / Type A)</name>
    <dbReference type="NCBI Taxonomy" id="195102"/>
    <lineage>
        <taxon>Bacteria</taxon>
        <taxon>Bacillati</taxon>
        <taxon>Bacillota</taxon>
        <taxon>Clostridia</taxon>
        <taxon>Eubacteriales</taxon>
        <taxon>Clostridiaceae</taxon>
        <taxon>Clostridium</taxon>
    </lineage>
</organism>
<feature type="chain" id="PRO_0000160343" description="ATP-dependent Clp protease ATP-binding subunit ClpX">
    <location>
        <begin position="1"/>
        <end position="435"/>
    </location>
</feature>
<feature type="domain" description="ClpX-type ZB" evidence="2">
    <location>
        <begin position="1"/>
        <end position="53"/>
    </location>
</feature>
<feature type="region of interest" description="Disordered" evidence="3">
    <location>
        <begin position="401"/>
        <end position="435"/>
    </location>
</feature>
<feature type="binding site" evidence="2">
    <location>
        <position position="12"/>
    </location>
    <ligand>
        <name>Zn(2+)</name>
        <dbReference type="ChEBI" id="CHEBI:29105"/>
    </ligand>
</feature>
<feature type="binding site" evidence="2">
    <location>
        <position position="15"/>
    </location>
    <ligand>
        <name>Zn(2+)</name>
        <dbReference type="ChEBI" id="CHEBI:29105"/>
    </ligand>
</feature>
<feature type="binding site" evidence="2">
    <location>
        <position position="34"/>
    </location>
    <ligand>
        <name>Zn(2+)</name>
        <dbReference type="ChEBI" id="CHEBI:29105"/>
    </ligand>
</feature>
<feature type="binding site" evidence="2">
    <location>
        <position position="37"/>
    </location>
    <ligand>
        <name>Zn(2+)</name>
        <dbReference type="ChEBI" id="CHEBI:29105"/>
    </ligand>
</feature>
<feature type="binding site" evidence="1">
    <location>
        <begin position="119"/>
        <end position="126"/>
    </location>
    <ligand>
        <name>ATP</name>
        <dbReference type="ChEBI" id="CHEBI:30616"/>
    </ligand>
</feature>